<organism>
    <name type="scientific">Yersinia pseudotuberculosis serotype O:3 (strain YPIII)</name>
    <dbReference type="NCBI Taxonomy" id="502800"/>
    <lineage>
        <taxon>Bacteria</taxon>
        <taxon>Pseudomonadati</taxon>
        <taxon>Pseudomonadota</taxon>
        <taxon>Gammaproteobacteria</taxon>
        <taxon>Enterobacterales</taxon>
        <taxon>Yersiniaceae</taxon>
        <taxon>Yersinia</taxon>
    </lineage>
</organism>
<evidence type="ECO:0000255" key="1">
    <source>
        <dbReference type="HAMAP-Rule" id="MF_00662"/>
    </source>
</evidence>
<reference key="1">
    <citation type="submission" date="2008-02" db="EMBL/GenBank/DDBJ databases">
        <title>Complete sequence of Yersinia pseudotuberculosis YPIII.</title>
        <authorList>
            <consortium name="US DOE Joint Genome Institute"/>
            <person name="Copeland A."/>
            <person name="Lucas S."/>
            <person name="Lapidus A."/>
            <person name="Glavina del Rio T."/>
            <person name="Dalin E."/>
            <person name="Tice H."/>
            <person name="Bruce D."/>
            <person name="Goodwin L."/>
            <person name="Pitluck S."/>
            <person name="Munk A.C."/>
            <person name="Brettin T."/>
            <person name="Detter J.C."/>
            <person name="Han C."/>
            <person name="Tapia R."/>
            <person name="Schmutz J."/>
            <person name="Larimer F."/>
            <person name="Land M."/>
            <person name="Hauser L."/>
            <person name="Challacombe J.F."/>
            <person name="Green L."/>
            <person name="Lindler L.E."/>
            <person name="Nikolich M.P."/>
            <person name="Richardson P."/>
        </authorList>
    </citation>
    <scope>NUCLEOTIDE SEQUENCE [LARGE SCALE GENOMIC DNA]</scope>
    <source>
        <strain>YPIII</strain>
    </source>
</reference>
<sequence>MLDSIKIKLQYLLPKQGLTQLAGWGANKQGGWLTQLVIKAFARYYKVDMKEAQDPEFSAYRTFNEFFVRPLRAGVRPVVAEENLLAQPADGAISQLGAIREGQILQAKGHNYSLEALLAGNYLLAAEFQNGQFVTTYLAPRDYHRVHMPCDGVLREMIYVPGDLFSVNPLTAANVPNLFARNERVICIFDTAFGPMAQILVGATIVGSIETVWAGTITPPREGVIRRWTYPQAGCEGAITLEKGQEMGRFKLGSTVINLFAEGKVYFAPQLNSGAVTRMGEVLAEAVPTTPSY</sequence>
<accession>B1JMP9</accession>
<proteinExistence type="inferred from homology"/>
<feature type="chain" id="PRO_1000131426" description="Phosphatidylserine decarboxylase beta chain" evidence="1">
    <location>
        <begin position="1"/>
        <end position="253"/>
    </location>
</feature>
<feature type="chain" id="PRO_1000131427" description="Phosphatidylserine decarboxylase alpha chain" evidence="1">
    <location>
        <begin position="254"/>
        <end position="293"/>
    </location>
</feature>
<feature type="active site" description="Charge relay system; for autoendoproteolytic cleavage activity" evidence="1">
    <location>
        <position position="90"/>
    </location>
</feature>
<feature type="active site" description="Charge relay system; for autoendoproteolytic cleavage activity" evidence="1">
    <location>
        <position position="147"/>
    </location>
</feature>
<feature type="active site" description="Charge relay system; for autoendoproteolytic cleavage activity" evidence="1">
    <location>
        <position position="254"/>
    </location>
</feature>
<feature type="active site" description="Schiff-base intermediate with substrate; via pyruvic acid; for decarboxylase activity" evidence="1">
    <location>
        <position position="254"/>
    </location>
</feature>
<feature type="site" description="Cleavage (non-hydrolytic); by autocatalysis" evidence="1">
    <location>
        <begin position="253"/>
        <end position="254"/>
    </location>
</feature>
<feature type="modified residue" description="Pyruvic acid (Ser); by autocatalysis" evidence="1">
    <location>
        <position position="254"/>
    </location>
</feature>
<comment type="function">
    <text evidence="1">Catalyzes the formation of phosphatidylethanolamine (PtdEtn) from phosphatidylserine (PtdSer).</text>
</comment>
<comment type="catalytic activity">
    <reaction evidence="1">
        <text>a 1,2-diacyl-sn-glycero-3-phospho-L-serine + H(+) = a 1,2-diacyl-sn-glycero-3-phosphoethanolamine + CO2</text>
        <dbReference type="Rhea" id="RHEA:20828"/>
        <dbReference type="ChEBI" id="CHEBI:15378"/>
        <dbReference type="ChEBI" id="CHEBI:16526"/>
        <dbReference type="ChEBI" id="CHEBI:57262"/>
        <dbReference type="ChEBI" id="CHEBI:64612"/>
        <dbReference type="EC" id="4.1.1.65"/>
    </reaction>
</comment>
<comment type="cofactor">
    <cofactor evidence="1">
        <name>pyruvate</name>
        <dbReference type="ChEBI" id="CHEBI:15361"/>
    </cofactor>
    <text evidence="1">Binds 1 pyruvoyl group covalently per subunit.</text>
</comment>
<comment type="pathway">
    <text evidence="1">Phospholipid metabolism; phosphatidylethanolamine biosynthesis; phosphatidylethanolamine from CDP-diacylglycerol: step 2/2.</text>
</comment>
<comment type="subunit">
    <text evidence="1">Heterodimer of a large membrane-associated beta subunit and a small pyruvoyl-containing alpha subunit.</text>
</comment>
<comment type="subcellular location">
    <subcellularLocation>
        <location evidence="1">Cell membrane</location>
        <topology evidence="1">Peripheral membrane protein</topology>
    </subcellularLocation>
</comment>
<comment type="PTM">
    <text evidence="1">Is synthesized initially as an inactive proenzyme. Formation of the active enzyme involves a self-maturation process in which the active site pyruvoyl group is generated from an internal serine residue via an autocatalytic post-translational modification. Two non-identical subunits are generated from the proenzyme in this reaction, and the pyruvate is formed at the N-terminus of the alpha chain, which is derived from the carboxyl end of the proenzyme. The autoendoproteolytic cleavage occurs by a canonical serine protease mechanism, in which the side chain hydroxyl group of the serine supplies its oxygen atom to form the C-terminus of the beta chain, while the remainder of the serine residue undergoes an oxidative deamination to produce ammonia and the pyruvoyl prosthetic group on the alpha chain. During this reaction, the Ser that is part of the protease active site of the proenzyme becomes the pyruvoyl prosthetic group, which constitutes an essential element of the active site of the mature decarboxylase.</text>
</comment>
<comment type="similarity">
    <text evidence="1">Belongs to the phosphatidylserine decarboxylase family. PSD-B subfamily. Prokaryotic type I sub-subfamily.</text>
</comment>
<keyword id="KW-1003">Cell membrane</keyword>
<keyword id="KW-0210">Decarboxylase</keyword>
<keyword id="KW-0444">Lipid biosynthesis</keyword>
<keyword id="KW-0443">Lipid metabolism</keyword>
<keyword id="KW-0456">Lyase</keyword>
<keyword id="KW-0472">Membrane</keyword>
<keyword id="KW-0594">Phospholipid biosynthesis</keyword>
<keyword id="KW-1208">Phospholipid metabolism</keyword>
<keyword id="KW-0670">Pyruvate</keyword>
<keyword id="KW-0865">Zymogen</keyword>
<protein>
    <recommendedName>
        <fullName evidence="1">Phosphatidylserine decarboxylase proenzyme</fullName>
        <ecNumber evidence="1">4.1.1.65</ecNumber>
    </recommendedName>
    <component>
        <recommendedName>
            <fullName evidence="1">Phosphatidylserine decarboxylase alpha chain</fullName>
        </recommendedName>
    </component>
    <component>
        <recommendedName>
            <fullName evidence="1">Phosphatidylserine decarboxylase beta chain</fullName>
        </recommendedName>
    </component>
</protein>
<gene>
    <name evidence="1" type="primary">psd</name>
    <name type="ordered locus">YPK_3810</name>
</gene>
<dbReference type="EC" id="4.1.1.65" evidence="1"/>
<dbReference type="EMBL" id="CP000950">
    <property type="protein sequence ID" value="ACA70076.1"/>
    <property type="molecule type" value="Genomic_DNA"/>
</dbReference>
<dbReference type="SMR" id="B1JMP9"/>
<dbReference type="KEGG" id="ypy:YPK_3810"/>
<dbReference type="PATRIC" id="fig|502800.11.peg.157"/>
<dbReference type="UniPathway" id="UPA00558">
    <property type="reaction ID" value="UER00616"/>
</dbReference>
<dbReference type="GO" id="GO:0005886">
    <property type="term" value="C:plasma membrane"/>
    <property type="evidence" value="ECO:0007669"/>
    <property type="project" value="UniProtKB-SubCell"/>
</dbReference>
<dbReference type="GO" id="GO:0004609">
    <property type="term" value="F:phosphatidylserine decarboxylase activity"/>
    <property type="evidence" value="ECO:0007669"/>
    <property type="project" value="UniProtKB-UniRule"/>
</dbReference>
<dbReference type="GO" id="GO:0006646">
    <property type="term" value="P:phosphatidylethanolamine biosynthetic process"/>
    <property type="evidence" value="ECO:0007669"/>
    <property type="project" value="UniProtKB-UniRule"/>
</dbReference>
<dbReference type="HAMAP" id="MF_00662">
    <property type="entry name" value="PS_decarb_PSD_B_type1"/>
    <property type="match status" value="1"/>
</dbReference>
<dbReference type="InterPro" id="IPR003817">
    <property type="entry name" value="PS_Dcarbxylase"/>
</dbReference>
<dbReference type="InterPro" id="IPR033177">
    <property type="entry name" value="PSD-B"/>
</dbReference>
<dbReference type="InterPro" id="IPR033178">
    <property type="entry name" value="PSD_type1_pro"/>
</dbReference>
<dbReference type="NCBIfam" id="TIGR00163">
    <property type="entry name" value="PS_decarb"/>
    <property type="match status" value="1"/>
</dbReference>
<dbReference type="PANTHER" id="PTHR10067">
    <property type="entry name" value="PHOSPHATIDYLSERINE DECARBOXYLASE"/>
    <property type="match status" value="1"/>
</dbReference>
<dbReference type="PANTHER" id="PTHR10067:SF6">
    <property type="entry name" value="PHOSPHATIDYLSERINE DECARBOXYLASE PROENZYME, MITOCHONDRIAL"/>
    <property type="match status" value="1"/>
</dbReference>
<dbReference type="Pfam" id="PF02666">
    <property type="entry name" value="PS_Dcarbxylase"/>
    <property type="match status" value="1"/>
</dbReference>
<name>PSD_YERPY</name>